<sequence>MVQTKRQKAIDLAVVPGKAYGIDEAIKILKTATKAKFIESVDVAIRLGVDVKKSDQQVRGSTLLPAGTGRAVRVAVFVPSGAKAEDALAAGADAVGMDDLAEKMQAGDLNYDVVIATPDAMRVVGKLGTLLGPRGLMPNPKVGTVSQNPGEAVKNAKSGQVRYRADKAGIIHCVIGKVNFDDEALKLNLQALLVDLIKIKPTASKGAYLQKVSLSSTMGPGVMIDQSTLSLK</sequence>
<feature type="chain" id="PRO_0000125780" description="Large ribosomal subunit protein uL1">
    <location>
        <begin position="1"/>
        <end position="232"/>
    </location>
</feature>
<protein>
    <recommendedName>
        <fullName evidence="1">Large ribosomal subunit protein uL1</fullName>
    </recommendedName>
    <alternativeName>
        <fullName evidence="2">50S ribosomal protein L1</fullName>
    </alternativeName>
</protein>
<comment type="function">
    <text evidence="1">Binds directly to 23S rRNA. The L1 stalk is quite mobile in the ribosome, and is involved in E site tRNA release.</text>
</comment>
<comment type="function">
    <text evidence="1">Protein L1 is also a translational repressor protein, it controls the translation of the L11 operon by binding to its mRNA.</text>
</comment>
<comment type="subunit">
    <text evidence="1">Part of the 50S ribosomal subunit.</text>
</comment>
<comment type="similarity">
    <text evidence="1">Belongs to the universal ribosomal protein uL1 family.</text>
</comment>
<proteinExistence type="inferred from homology"/>
<gene>
    <name evidence="1" type="primary">rplA</name>
    <name type="ordered locus">XF_2636</name>
</gene>
<name>RL1_XYLFA</name>
<dbReference type="EMBL" id="AE003849">
    <property type="protein sequence ID" value="AAF85433.1"/>
    <property type="molecule type" value="Genomic_DNA"/>
</dbReference>
<dbReference type="PIR" id="E82531">
    <property type="entry name" value="E82531"/>
</dbReference>
<dbReference type="RefSeq" id="WP_010895052.1">
    <property type="nucleotide sequence ID" value="NC_002488.3"/>
</dbReference>
<dbReference type="SMR" id="Q9PA83"/>
<dbReference type="STRING" id="160492.XF_2636"/>
<dbReference type="KEGG" id="xfa:XF_2636"/>
<dbReference type="eggNOG" id="COG0081">
    <property type="taxonomic scope" value="Bacteria"/>
</dbReference>
<dbReference type="HOGENOM" id="CLU_062853_0_0_6"/>
<dbReference type="Proteomes" id="UP000000812">
    <property type="component" value="Chromosome"/>
</dbReference>
<dbReference type="GO" id="GO:0022625">
    <property type="term" value="C:cytosolic large ribosomal subunit"/>
    <property type="evidence" value="ECO:0007669"/>
    <property type="project" value="TreeGrafter"/>
</dbReference>
<dbReference type="GO" id="GO:0019843">
    <property type="term" value="F:rRNA binding"/>
    <property type="evidence" value="ECO:0007669"/>
    <property type="project" value="UniProtKB-UniRule"/>
</dbReference>
<dbReference type="GO" id="GO:0003735">
    <property type="term" value="F:structural constituent of ribosome"/>
    <property type="evidence" value="ECO:0007669"/>
    <property type="project" value="InterPro"/>
</dbReference>
<dbReference type="GO" id="GO:0000049">
    <property type="term" value="F:tRNA binding"/>
    <property type="evidence" value="ECO:0007669"/>
    <property type="project" value="UniProtKB-KW"/>
</dbReference>
<dbReference type="GO" id="GO:0006417">
    <property type="term" value="P:regulation of translation"/>
    <property type="evidence" value="ECO:0007669"/>
    <property type="project" value="UniProtKB-KW"/>
</dbReference>
<dbReference type="GO" id="GO:0006412">
    <property type="term" value="P:translation"/>
    <property type="evidence" value="ECO:0007669"/>
    <property type="project" value="UniProtKB-UniRule"/>
</dbReference>
<dbReference type="CDD" id="cd00403">
    <property type="entry name" value="Ribosomal_L1"/>
    <property type="match status" value="1"/>
</dbReference>
<dbReference type="FunFam" id="3.40.50.790:FF:000001">
    <property type="entry name" value="50S ribosomal protein L1"/>
    <property type="match status" value="1"/>
</dbReference>
<dbReference type="Gene3D" id="3.30.190.20">
    <property type="match status" value="1"/>
</dbReference>
<dbReference type="Gene3D" id="3.40.50.790">
    <property type="match status" value="1"/>
</dbReference>
<dbReference type="HAMAP" id="MF_01318_B">
    <property type="entry name" value="Ribosomal_uL1_B"/>
    <property type="match status" value="1"/>
</dbReference>
<dbReference type="InterPro" id="IPR005878">
    <property type="entry name" value="Ribosom_uL1_bac-type"/>
</dbReference>
<dbReference type="InterPro" id="IPR002143">
    <property type="entry name" value="Ribosomal_uL1"/>
</dbReference>
<dbReference type="InterPro" id="IPR023674">
    <property type="entry name" value="Ribosomal_uL1-like"/>
</dbReference>
<dbReference type="InterPro" id="IPR028364">
    <property type="entry name" value="Ribosomal_uL1/biogenesis"/>
</dbReference>
<dbReference type="InterPro" id="IPR016095">
    <property type="entry name" value="Ribosomal_uL1_3-a/b-sand"/>
</dbReference>
<dbReference type="InterPro" id="IPR023673">
    <property type="entry name" value="Ribosomal_uL1_CS"/>
</dbReference>
<dbReference type="NCBIfam" id="TIGR01169">
    <property type="entry name" value="rplA_bact"/>
    <property type="match status" value="1"/>
</dbReference>
<dbReference type="PANTHER" id="PTHR36427">
    <property type="entry name" value="54S RIBOSOMAL PROTEIN L1, MITOCHONDRIAL"/>
    <property type="match status" value="1"/>
</dbReference>
<dbReference type="PANTHER" id="PTHR36427:SF3">
    <property type="entry name" value="LARGE RIBOSOMAL SUBUNIT PROTEIN UL1M"/>
    <property type="match status" value="1"/>
</dbReference>
<dbReference type="Pfam" id="PF00687">
    <property type="entry name" value="Ribosomal_L1"/>
    <property type="match status" value="1"/>
</dbReference>
<dbReference type="PIRSF" id="PIRSF002155">
    <property type="entry name" value="Ribosomal_L1"/>
    <property type="match status" value="1"/>
</dbReference>
<dbReference type="SUPFAM" id="SSF56808">
    <property type="entry name" value="Ribosomal protein L1"/>
    <property type="match status" value="1"/>
</dbReference>
<dbReference type="PROSITE" id="PS01199">
    <property type="entry name" value="RIBOSOMAL_L1"/>
    <property type="match status" value="1"/>
</dbReference>
<accession>Q9PA83</accession>
<keyword id="KW-0678">Repressor</keyword>
<keyword id="KW-0687">Ribonucleoprotein</keyword>
<keyword id="KW-0689">Ribosomal protein</keyword>
<keyword id="KW-0694">RNA-binding</keyword>
<keyword id="KW-0699">rRNA-binding</keyword>
<keyword id="KW-0810">Translation regulation</keyword>
<keyword id="KW-0820">tRNA-binding</keyword>
<evidence type="ECO:0000255" key="1">
    <source>
        <dbReference type="HAMAP-Rule" id="MF_01318"/>
    </source>
</evidence>
<evidence type="ECO:0000305" key="2"/>
<reference key="1">
    <citation type="journal article" date="2000" name="Nature">
        <title>The genome sequence of the plant pathogen Xylella fastidiosa.</title>
        <authorList>
            <person name="Simpson A.J.G."/>
            <person name="Reinach F.C."/>
            <person name="Arruda P."/>
            <person name="Abreu F.A."/>
            <person name="Acencio M."/>
            <person name="Alvarenga R."/>
            <person name="Alves L.M.C."/>
            <person name="Araya J.E."/>
            <person name="Baia G.S."/>
            <person name="Baptista C.S."/>
            <person name="Barros M.H."/>
            <person name="Bonaccorsi E.D."/>
            <person name="Bordin S."/>
            <person name="Bove J.M."/>
            <person name="Briones M.R.S."/>
            <person name="Bueno M.R.P."/>
            <person name="Camargo A.A."/>
            <person name="Camargo L.E.A."/>
            <person name="Carraro D.M."/>
            <person name="Carrer H."/>
            <person name="Colauto N.B."/>
            <person name="Colombo C."/>
            <person name="Costa F.F."/>
            <person name="Costa M.C.R."/>
            <person name="Costa-Neto C.M."/>
            <person name="Coutinho L.L."/>
            <person name="Cristofani M."/>
            <person name="Dias-Neto E."/>
            <person name="Docena C."/>
            <person name="El-Dorry H."/>
            <person name="Facincani A.P."/>
            <person name="Ferreira A.J.S."/>
            <person name="Ferreira V.C.A."/>
            <person name="Ferro J.A."/>
            <person name="Fraga J.S."/>
            <person name="Franca S.C."/>
            <person name="Franco M.C."/>
            <person name="Frohme M."/>
            <person name="Furlan L.R."/>
            <person name="Garnier M."/>
            <person name="Goldman G.H."/>
            <person name="Goldman M.H.S."/>
            <person name="Gomes S.L."/>
            <person name="Gruber A."/>
            <person name="Ho P.L."/>
            <person name="Hoheisel J.D."/>
            <person name="Junqueira M.L."/>
            <person name="Kemper E.L."/>
            <person name="Kitajima J.P."/>
            <person name="Krieger J.E."/>
            <person name="Kuramae E.E."/>
            <person name="Laigret F."/>
            <person name="Lambais M.R."/>
            <person name="Leite L.C.C."/>
            <person name="Lemos E.G.M."/>
            <person name="Lemos M.V.F."/>
            <person name="Lopes S.A."/>
            <person name="Lopes C.R."/>
            <person name="Machado J.A."/>
            <person name="Machado M.A."/>
            <person name="Madeira A.M.B.N."/>
            <person name="Madeira H.M.F."/>
            <person name="Marino C.L."/>
            <person name="Marques M.V."/>
            <person name="Martins E.A.L."/>
            <person name="Martins E.M.F."/>
            <person name="Matsukuma A.Y."/>
            <person name="Menck C.F.M."/>
            <person name="Miracca E.C."/>
            <person name="Miyaki C.Y."/>
            <person name="Monteiro-Vitorello C.B."/>
            <person name="Moon D.H."/>
            <person name="Nagai M.A."/>
            <person name="Nascimento A.L.T.O."/>
            <person name="Netto L.E.S."/>
            <person name="Nhani A. Jr."/>
            <person name="Nobrega F.G."/>
            <person name="Nunes L.R."/>
            <person name="Oliveira M.A."/>
            <person name="de Oliveira M.C."/>
            <person name="de Oliveira R.C."/>
            <person name="Palmieri D.A."/>
            <person name="Paris A."/>
            <person name="Peixoto B.R."/>
            <person name="Pereira G.A.G."/>
            <person name="Pereira H.A. Jr."/>
            <person name="Pesquero J.B."/>
            <person name="Quaggio R.B."/>
            <person name="Roberto P.G."/>
            <person name="Rodrigues V."/>
            <person name="de Rosa A.J.M."/>
            <person name="de Rosa V.E. Jr."/>
            <person name="de Sa R.G."/>
            <person name="Santelli R.V."/>
            <person name="Sawasaki H.E."/>
            <person name="da Silva A.C.R."/>
            <person name="da Silva A.M."/>
            <person name="da Silva F.R."/>
            <person name="Silva W.A. Jr."/>
            <person name="da Silveira J.F."/>
            <person name="Silvestri M.L.Z."/>
            <person name="Siqueira W.J."/>
            <person name="de Souza A.A."/>
            <person name="de Souza A.P."/>
            <person name="Terenzi M.F."/>
            <person name="Truffi D."/>
            <person name="Tsai S.M."/>
            <person name="Tsuhako M.H."/>
            <person name="Vallada H."/>
            <person name="Van Sluys M.A."/>
            <person name="Verjovski-Almeida S."/>
            <person name="Vettore A.L."/>
            <person name="Zago M.A."/>
            <person name="Zatz M."/>
            <person name="Meidanis J."/>
            <person name="Setubal J.C."/>
        </authorList>
    </citation>
    <scope>NUCLEOTIDE SEQUENCE [LARGE SCALE GENOMIC DNA]</scope>
    <source>
        <strain>9a5c</strain>
    </source>
</reference>
<organism>
    <name type="scientific">Xylella fastidiosa (strain 9a5c)</name>
    <dbReference type="NCBI Taxonomy" id="160492"/>
    <lineage>
        <taxon>Bacteria</taxon>
        <taxon>Pseudomonadati</taxon>
        <taxon>Pseudomonadota</taxon>
        <taxon>Gammaproteobacteria</taxon>
        <taxon>Lysobacterales</taxon>
        <taxon>Lysobacteraceae</taxon>
        <taxon>Xylella</taxon>
    </lineage>
</organism>